<name>GDND_BACLD</name>
<keyword id="KW-1003">Cell membrane</keyword>
<keyword id="KW-0406">Ion transport</keyword>
<keyword id="KW-0472">Membrane</keyword>
<keyword id="KW-1185">Reference proteome</keyword>
<keyword id="KW-0812">Transmembrane</keyword>
<keyword id="KW-1133">Transmembrane helix</keyword>
<keyword id="KW-0813">Transport</keyword>
<proteinExistence type="inferred from homology"/>
<feature type="chain" id="PRO_0000108112" description="Probable guanidinium efflux system subunit GdnD">
    <location>
        <begin position="1"/>
        <end position="104"/>
    </location>
</feature>
<feature type="transmembrane region" description="Helical" evidence="2">
    <location>
        <begin position="3"/>
        <end position="23"/>
    </location>
</feature>
<feature type="transmembrane region" description="Helical" evidence="2">
    <location>
        <begin position="31"/>
        <end position="51"/>
    </location>
</feature>
<feature type="transmembrane region" description="Helical" evidence="2">
    <location>
        <begin position="58"/>
        <end position="78"/>
    </location>
</feature>
<feature type="transmembrane region" description="Helical" evidence="2">
    <location>
        <begin position="84"/>
        <end position="104"/>
    </location>
</feature>
<accession>Q65KV0</accession>
<accession>Q62W97</accession>
<dbReference type="EMBL" id="AE017333">
    <property type="protein sequence ID" value="AAU40314.1"/>
    <property type="molecule type" value="Genomic_DNA"/>
</dbReference>
<dbReference type="EMBL" id="CP000002">
    <property type="protein sequence ID" value="AAU22961.2"/>
    <property type="molecule type" value="Genomic_DNA"/>
</dbReference>
<dbReference type="RefSeq" id="WP_003180981.1">
    <property type="nucleotide sequence ID" value="NC_006322.1"/>
</dbReference>
<dbReference type="SMR" id="Q65KV0"/>
<dbReference type="STRING" id="279010.BL03754"/>
<dbReference type="KEGG" id="bld:BLi01410"/>
<dbReference type="KEGG" id="bli:BL03754"/>
<dbReference type="eggNOG" id="COG2076">
    <property type="taxonomic scope" value="Bacteria"/>
</dbReference>
<dbReference type="HOGENOM" id="CLU_133067_1_2_9"/>
<dbReference type="Proteomes" id="UP000000606">
    <property type="component" value="Chromosome"/>
</dbReference>
<dbReference type="GO" id="GO:0005886">
    <property type="term" value="C:plasma membrane"/>
    <property type="evidence" value="ECO:0007669"/>
    <property type="project" value="UniProtKB-SubCell"/>
</dbReference>
<dbReference type="GO" id="GO:0022857">
    <property type="term" value="F:transmembrane transporter activity"/>
    <property type="evidence" value="ECO:0007669"/>
    <property type="project" value="InterPro"/>
</dbReference>
<dbReference type="GO" id="GO:0006811">
    <property type="term" value="P:monoatomic ion transport"/>
    <property type="evidence" value="ECO:0007669"/>
    <property type="project" value="UniProtKB-KW"/>
</dbReference>
<dbReference type="FunFam" id="1.10.3730.20:FF:000001">
    <property type="entry name" value="Quaternary ammonium compound resistance transporter SugE"/>
    <property type="match status" value="1"/>
</dbReference>
<dbReference type="Gene3D" id="1.10.3730.20">
    <property type="match status" value="1"/>
</dbReference>
<dbReference type="InterPro" id="IPR000390">
    <property type="entry name" value="Small_drug/metabolite_transptr"/>
</dbReference>
<dbReference type="InterPro" id="IPR045324">
    <property type="entry name" value="Small_multidrug_res"/>
</dbReference>
<dbReference type="PANTHER" id="PTHR30561:SF0">
    <property type="entry name" value="GUANIDINIUM EXPORTER"/>
    <property type="match status" value="1"/>
</dbReference>
<dbReference type="PANTHER" id="PTHR30561">
    <property type="entry name" value="SMR FAMILY PROTON-DEPENDENT DRUG EFFLUX TRANSPORTER SUGE"/>
    <property type="match status" value="1"/>
</dbReference>
<dbReference type="Pfam" id="PF00893">
    <property type="entry name" value="Multi_Drug_Res"/>
    <property type="match status" value="1"/>
</dbReference>
<dbReference type="SUPFAM" id="SSF103481">
    <property type="entry name" value="Multidrug resistance efflux transporter EmrE"/>
    <property type="match status" value="1"/>
</dbReference>
<gene>
    <name evidence="1" type="primary">gdnD</name>
    <name type="synonym">ykkD</name>
    <name type="ordered locus">BLi01410</name>
    <name type="ordered locus">BL03754</name>
</gene>
<protein>
    <recommendedName>
        <fullName evidence="1">Probable guanidinium efflux system subunit GdnD</fullName>
    </recommendedName>
</protein>
<comment type="function">
    <text evidence="1">Probably involved in guanidinium transport.</text>
</comment>
<comment type="subunit">
    <text evidence="1">The efflux pump is composed of GdnC and GdnD.</text>
</comment>
<comment type="subcellular location">
    <subcellularLocation>
        <location evidence="3">Cell membrane</location>
        <topology evidence="2">Multi-pass membrane protein</topology>
    </subcellularLocation>
</comment>
<comment type="similarity">
    <text evidence="3">Belongs to the drug/metabolite transporter (DMT) superfamily. Small multidrug resistance (SMR) (TC 2.A.7.1) family. YkkC/YkkD subfamily.</text>
</comment>
<organism>
    <name type="scientific">Bacillus licheniformis (strain ATCC 14580 / DSM 13 / JCM 2505 / CCUG 7422 / NBRC 12200 / NCIMB 9375 / NCTC 10341 / NRRL NRS-1264 / Gibson 46)</name>
    <dbReference type="NCBI Taxonomy" id="279010"/>
    <lineage>
        <taxon>Bacteria</taxon>
        <taxon>Bacillati</taxon>
        <taxon>Bacillota</taxon>
        <taxon>Bacilli</taxon>
        <taxon>Bacillales</taxon>
        <taxon>Bacillaceae</taxon>
        <taxon>Bacillus</taxon>
    </lineage>
</organism>
<evidence type="ECO:0000250" key="1">
    <source>
        <dbReference type="UniProtKB" id="P49857"/>
    </source>
</evidence>
<evidence type="ECO:0000255" key="2"/>
<evidence type="ECO:0000305" key="3"/>
<sequence length="104" mass="11357">MEWICLIAAGILEMLGVTMMNQFHKDKRVRWIFLLIIGFAASFFLLSLAMETLPMGTAYAVWTGIGTVGGALVGILFYGEPKDGKRIFFIALILGSAVGLKLIS</sequence>
<reference key="1">
    <citation type="journal article" date="2004" name="J. Mol. Microbiol. Biotechnol.">
        <title>The complete genome sequence of Bacillus licheniformis DSM13, an organism with great industrial potential.</title>
        <authorList>
            <person name="Veith B."/>
            <person name="Herzberg C."/>
            <person name="Steckel S."/>
            <person name="Feesche J."/>
            <person name="Maurer K.H."/>
            <person name="Ehrenreich P."/>
            <person name="Baeumer S."/>
            <person name="Henne A."/>
            <person name="Liesegang H."/>
            <person name="Merkl R."/>
            <person name="Ehrenreich A."/>
            <person name="Gottschalk G."/>
        </authorList>
    </citation>
    <scope>NUCLEOTIDE SEQUENCE [LARGE SCALE GENOMIC DNA]</scope>
    <source>
        <strain>ATCC 14580 / DSM 13 / JCM 2505 / CCUG 7422 / NBRC 12200 / NCIMB 9375 / NCTC 10341 / NRRL NRS-1264 / Gibson 46</strain>
    </source>
</reference>
<reference key="2">
    <citation type="journal article" date="2004" name="Genome Biol.">
        <title>Complete genome sequence of the industrial bacterium Bacillus licheniformis and comparisons with closely related Bacillus species.</title>
        <authorList>
            <person name="Rey M.W."/>
            <person name="Ramaiya P."/>
            <person name="Nelson B.A."/>
            <person name="Brody-Karpin S.D."/>
            <person name="Zaretsky E.J."/>
            <person name="Tang M."/>
            <person name="Lopez de Leon A."/>
            <person name="Xiang H."/>
            <person name="Gusti V."/>
            <person name="Clausen I.G."/>
            <person name="Olsen P.B."/>
            <person name="Rasmussen M.D."/>
            <person name="Andersen J.T."/>
            <person name="Joergensen P.L."/>
            <person name="Larsen T.S."/>
            <person name="Sorokin A."/>
            <person name="Bolotin A."/>
            <person name="Lapidus A."/>
            <person name="Galleron N."/>
            <person name="Ehrlich S.D."/>
            <person name="Berka R.M."/>
        </authorList>
    </citation>
    <scope>NUCLEOTIDE SEQUENCE [LARGE SCALE GENOMIC DNA]</scope>
    <source>
        <strain>ATCC 14580 / DSM 13 / JCM 2505 / CCUG 7422 / NBRC 12200 / NCIMB 9375 / NCTC 10341 / NRRL NRS-1264 / Gibson 46</strain>
    </source>
</reference>
<reference key="3">
    <citation type="submission" date="2007-04" db="EMBL/GenBank/DDBJ databases">
        <authorList>
            <person name="Berka R.M."/>
            <person name="Rey M.W."/>
            <person name="Ramaiya P."/>
        </authorList>
    </citation>
    <scope>SEQUENCE REVISION</scope>
</reference>